<keyword id="KW-0004">4Fe-4S</keyword>
<keyword id="KW-0997">Cell inner membrane</keyword>
<keyword id="KW-1003">Cell membrane</keyword>
<keyword id="KW-0249">Electron transport</keyword>
<keyword id="KW-0408">Iron</keyword>
<keyword id="KW-0411">Iron-sulfur</keyword>
<keyword id="KW-0472">Membrane</keyword>
<keyword id="KW-0479">Metal-binding</keyword>
<keyword id="KW-0677">Repeat</keyword>
<keyword id="KW-1278">Translocase</keyword>
<keyword id="KW-0813">Transport</keyword>
<gene>
    <name evidence="1" type="primary">rnfC</name>
    <name type="ordered locus">NT01EI_2088</name>
</gene>
<comment type="function">
    <text evidence="1">Part of a membrane-bound complex that couples electron transfer with translocation of ions across the membrane.</text>
</comment>
<comment type="cofactor">
    <cofactor evidence="1">
        <name>[4Fe-4S] cluster</name>
        <dbReference type="ChEBI" id="CHEBI:49883"/>
    </cofactor>
    <text evidence="1">Binds 2 [4Fe-4S] clusters per subunit.</text>
</comment>
<comment type="subunit">
    <text evidence="1">The complex is composed of six subunits: RnfA, RnfB, RnfC, RnfD, RnfE and RnfG.</text>
</comment>
<comment type="subcellular location">
    <subcellularLocation>
        <location evidence="1">Cell inner membrane</location>
        <topology evidence="1">Peripheral membrane protein</topology>
    </subcellularLocation>
</comment>
<comment type="similarity">
    <text evidence="1">Belongs to the 4Fe4S bacterial-type ferredoxin family. RnfC subfamily.</text>
</comment>
<protein>
    <recommendedName>
        <fullName evidence="1">Ion-translocating oxidoreductase complex subunit C</fullName>
        <ecNumber evidence="1">7.-.-.-</ecNumber>
    </recommendedName>
    <alternativeName>
        <fullName evidence="1">Rnf electron transport complex subunit C</fullName>
    </alternativeName>
</protein>
<organism>
    <name type="scientific">Edwardsiella ictaluri (strain 93-146)</name>
    <dbReference type="NCBI Taxonomy" id="634503"/>
    <lineage>
        <taxon>Bacteria</taxon>
        <taxon>Pseudomonadati</taxon>
        <taxon>Pseudomonadota</taxon>
        <taxon>Gammaproteobacteria</taxon>
        <taxon>Enterobacterales</taxon>
        <taxon>Hafniaceae</taxon>
        <taxon>Edwardsiella</taxon>
    </lineage>
</organism>
<feature type="chain" id="PRO_1000206293" description="Ion-translocating oxidoreductase complex subunit C">
    <location>
        <begin position="1"/>
        <end position="800"/>
    </location>
</feature>
<feature type="domain" description="4Fe-4S ferredoxin-type 1" evidence="1">
    <location>
        <begin position="367"/>
        <end position="398"/>
    </location>
</feature>
<feature type="domain" description="4Fe-4S ferredoxin-type 2" evidence="1">
    <location>
        <begin position="408"/>
        <end position="437"/>
    </location>
</feature>
<feature type="region of interest" description="Disordered" evidence="2">
    <location>
        <begin position="536"/>
        <end position="558"/>
    </location>
</feature>
<feature type="region of interest" description="Disordered" evidence="2">
    <location>
        <begin position="571"/>
        <end position="631"/>
    </location>
</feature>
<feature type="region of interest" description="Disordered" evidence="2">
    <location>
        <begin position="647"/>
        <end position="706"/>
    </location>
</feature>
<feature type="compositionally biased region" description="Low complexity" evidence="2">
    <location>
        <begin position="536"/>
        <end position="553"/>
    </location>
</feature>
<feature type="compositionally biased region" description="Low complexity" evidence="2">
    <location>
        <begin position="571"/>
        <end position="583"/>
    </location>
</feature>
<feature type="compositionally biased region" description="Low complexity" evidence="2">
    <location>
        <begin position="599"/>
        <end position="617"/>
    </location>
</feature>
<feature type="compositionally biased region" description="Low complexity" evidence="2">
    <location>
        <begin position="647"/>
        <end position="667"/>
    </location>
</feature>
<feature type="compositionally biased region" description="Low complexity" evidence="2">
    <location>
        <begin position="675"/>
        <end position="690"/>
    </location>
</feature>
<feature type="compositionally biased region" description="Polar residues" evidence="2">
    <location>
        <begin position="693"/>
        <end position="705"/>
    </location>
</feature>
<feature type="binding site" evidence="1">
    <location>
        <position position="378"/>
    </location>
    <ligand>
        <name>[4Fe-4S] cluster</name>
        <dbReference type="ChEBI" id="CHEBI:49883"/>
        <label>1</label>
    </ligand>
</feature>
<feature type="binding site" evidence="1">
    <location>
        <position position="381"/>
    </location>
    <ligand>
        <name>[4Fe-4S] cluster</name>
        <dbReference type="ChEBI" id="CHEBI:49883"/>
        <label>1</label>
    </ligand>
</feature>
<feature type="binding site" evidence="1">
    <location>
        <position position="384"/>
    </location>
    <ligand>
        <name>[4Fe-4S] cluster</name>
        <dbReference type="ChEBI" id="CHEBI:49883"/>
        <label>1</label>
    </ligand>
</feature>
<feature type="binding site" evidence="1">
    <location>
        <position position="388"/>
    </location>
    <ligand>
        <name>[4Fe-4S] cluster</name>
        <dbReference type="ChEBI" id="CHEBI:49883"/>
        <label>2</label>
    </ligand>
</feature>
<feature type="binding site" evidence="1">
    <location>
        <position position="417"/>
    </location>
    <ligand>
        <name>[4Fe-4S] cluster</name>
        <dbReference type="ChEBI" id="CHEBI:49883"/>
        <label>2</label>
    </ligand>
</feature>
<feature type="binding site" evidence="1">
    <location>
        <position position="420"/>
    </location>
    <ligand>
        <name>[4Fe-4S] cluster</name>
        <dbReference type="ChEBI" id="CHEBI:49883"/>
        <label>2</label>
    </ligand>
</feature>
<feature type="binding site" evidence="1">
    <location>
        <position position="423"/>
    </location>
    <ligand>
        <name>[4Fe-4S] cluster</name>
        <dbReference type="ChEBI" id="CHEBI:49883"/>
        <label>2</label>
    </ligand>
</feature>
<feature type="binding site" evidence="1">
    <location>
        <position position="427"/>
    </location>
    <ligand>
        <name>[4Fe-4S] cluster</name>
        <dbReference type="ChEBI" id="CHEBI:49883"/>
        <label>1</label>
    </ligand>
</feature>
<sequence>MFKLFAALRKERLWDFTGGIHPPEMKQISSEIPLRRIPLPNLLIIPLQQHLGPEGELLVKVGERVLKGQPLTRGNGRTLPVHASTSGTISAISRQVTAHPSGLPELCISLVPDQQDCWGERHPLPDYRAMTPPALIDHIHQAGIAGLGGAGFPTAAKLNGGADRINTLIINAAECEPYITADDRLMREHAAEIVSGCAILSHILAPERVLIGIEDNKPQAIAALRHALQCHEKIQLRVIPTKYPSGGAKQLIKILTGMEVPHGRHSASIGVLMQNVATVYAIKRAVIDGEPLIERVVTLTGEQMHRPGNVWAAIGTPVKHLLQNGGLIAQNKHPMVIMGGPLMGFTLSRLGVPVVKITNCILTPSRDEFSVPQAEQPCIRCGACADVCPARLLPQQLYWFSQGKEHDKARGYHLQECIECGACAYVCPSNIPLVQYYRQEKAEIRALDDEARRAAEAKARFEARLARLEREKAAREQRHKQAAVSVSNSDRETIQAALQRINLRKAGQTDDVAAVNDPRQAALAAAIARAKAKQAGATPAPAATDSDAAAPAPQDDPRKAAIAAAITRAKAKQAGATPAPAATNSDAVAPAPQDDPRKAAIARAKAKQAGATPAPAATNSDAVAPAPQDDPRKAAIAAAIARAKAKAKQAGATPAPATTDSDAADPAPQDDPRKAAIAAAIARAKAKQAASGHATTEPVTVQENTDGARRQIHRATLQAAYASGAGADLTAAAEGATPESDRQAAIATAIARVKARQTLVNGEVPKPVATSTPTDTQKAAVAAAIARIKAKQASAAPSEE</sequence>
<evidence type="ECO:0000255" key="1">
    <source>
        <dbReference type="HAMAP-Rule" id="MF_00461"/>
    </source>
</evidence>
<evidence type="ECO:0000256" key="2">
    <source>
        <dbReference type="SAM" id="MobiDB-lite"/>
    </source>
</evidence>
<reference key="1">
    <citation type="submission" date="2009-03" db="EMBL/GenBank/DDBJ databases">
        <title>Complete genome sequence of Edwardsiella ictaluri 93-146.</title>
        <authorList>
            <person name="Williams M.L."/>
            <person name="Gillaspy A.F."/>
            <person name="Dyer D.W."/>
            <person name="Thune R.L."/>
            <person name="Waldbieser G.C."/>
            <person name="Schuster S.C."/>
            <person name="Gipson J."/>
            <person name="Zaitshik J."/>
            <person name="Landry C."/>
            <person name="Lawrence M.L."/>
        </authorList>
    </citation>
    <scope>NUCLEOTIDE SEQUENCE [LARGE SCALE GENOMIC DNA]</scope>
    <source>
        <strain>93-146</strain>
    </source>
</reference>
<proteinExistence type="inferred from homology"/>
<name>RNFC_EDWI9</name>
<accession>C5BDE7</accession>
<dbReference type="EC" id="7.-.-.-" evidence="1"/>
<dbReference type="EMBL" id="CP001600">
    <property type="protein sequence ID" value="ACR69264.1"/>
    <property type="molecule type" value="Genomic_DNA"/>
</dbReference>
<dbReference type="RefSeq" id="WP_015871395.1">
    <property type="nucleotide sequence ID" value="NC_012779.2"/>
</dbReference>
<dbReference type="SMR" id="C5BDE7"/>
<dbReference type="STRING" id="67780.B6E78_03050"/>
<dbReference type="GeneID" id="69539017"/>
<dbReference type="KEGG" id="eic:NT01EI_2088"/>
<dbReference type="PATRIC" id="fig|634503.3.peg.1864"/>
<dbReference type="HOGENOM" id="CLU_010808_2_1_6"/>
<dbReference type="OrthoDB" id="9767754at2"/>
<dbReference type="Proteomes" id="UP000001485">
    <property type="component" value="Chromosome"/>
</dbReference>
<dbReference type="GO" id="GO:0005886">
    <property type="term" value="C:plasma membrane"/>
    <property type="evidence" value="ECO:0007669"/>
    <property type="project" value="UniProtKB-SubCell"/>
</dbReference>
<dbReference type="GO" id="GO:0051539">
    <property type="term" value="F:4 iron, 4 sulfur cluster binding"/>
    <property type="evidence" value="ECO:0007669"/>
    <property type="project" value="UniProtKB-KW"/>
</dbReference>
<dbReference type="GO" id="GO:0009055">
    <property type="term" value="F:electron transfer activity"/>
    <property type="evidence" value="ECO:0007669"/>
    <property type="project" value="InterPro"/>
</dbReference>
<dbReference type="GO" id="GO:0046872">
    <property type="term" value="F:metal ion binding"/>
    <property type="evidence" value="ECO:0007669"/>
    <property type="project" value="UniProtKB-KW"/>
</dbReference>
<dbReference type="GO" id="GO:0022900">
    <property type="term" value="P:electron transport chain"/>
    <property type="evidence" value="ECO:0007669"/>
    <property type="project" value="UniProtKB-UniRule"/>
</dbReference>
<dbReference type="Gene3D" id="3.30.70.20">
    <property type="match status" value="1"/>
</dbReference>
<dbReference type="Gene3D" id="3.40.50.11540">
    <property type="entry name" value="NADH-ubiquinone oxidoreductase 51kDa subunit"/>
    <property type="match status" value="1"/>
</dbReference>
<dbReference type="HAMAP" id="MF_00461">
    <property type="entry name" value="RsxC_RnfC"/>
    <property type="match status" value="1"/>
</dbReference>
<dbReference type="InterPro" id="IPR017896">
    <property type="entry name" value="4Fe4S_Fe-S-bd"/>
</dbReference>
<dbReference type="InterPro" id="IPR017900">
    <property type="entry name" value="4Fe4S_Fe_S_CS"/>
</dbReference>
<dbReference type="InterPro" id="IPR010208">
    <property type="entry name" value="Ion_transpt_RnfC/RsxC"/>
</dbReference>
<dbReference type="InterPro" id="IPR011538">
    <property type="entry name" value="Nuo51_FMN-bd"/>
</dbReference>
<dbReference type="InterPro" id="IPR037225">
    <property type="entry name" value="Nuo51_FMN-bd_sf"/>
</dbReference>
<dbReference type="InterPro" id="IPR026902">
    <property type="entry name" value="RnfC_N"/>
</dbReference>
<dbReference type="InterPro" id="IPR019554">
    <property type="entry name" value="Soluble_ligand-bd"/>
</dbReference>
<dbReference type="NCBIfam" id="NF003454">
    <property type="entry name" value="PRK05035.1"/>
    <property type="match status" value="1"/>
</dbReference>
<dbReference type="NCBIfam" id="TIGR01945">
    <property type="entry name" value="rnfC"/>
    <property type="match status" value="1"/>
</dbReference>
<dbReference type="PANTHER" id="PTHR43034">
    <property type="entry name" value="ION-TRANSLOCATING OXIDOREDUCTASE COMPLEX SUBUNIT C"/>
    <property type="match status" value="1"/>
</dbReference>
<dbReference type="PANTHER" id="PTHR43034:SF2">
    <property type="entry name" value="ION-TRANSLOCATING OXIDOREDUCTASE COMPLEX SUBUNIT C"/>
    <property type="match status" value="1"/>
</dbReference>
<dbReference type="Pfam" id="PF01512">
    <property type="entry name" value="Complex1_51K"/>
    <property type="match status" value="1"/>
</dbReference>
<dbReference type="Pfam" id="PF12838">
    <property type="entry name" value="Fer4_7"/>
    <property type="match status" value="1"/>
</dbReference>
<dbReference type="Pfam" id="PF13375">
    <property type="entry name" value="RnfC_N"/>
    <property type="match status" value="1"/>
</dbReference>
<dbReference type="Pfam" id="PF10531">
    <property type="entry name" value="SLBB"/>
    <property type="match status" value="1"/>
</dbReference>
<dbReference type="SUPFAM" id="SSF46548">
    <property type="entry name" value="alpha-helical ferredoxin"/>
    <property type="match status" value="1"/>
</dbReference>
<dbReference type="SUPFAM" id="SSF142019">
    <property type="entry name" value="Nqo1 FMN-binding domain-like"/>
    <property type="match status" value="1"/>
</dbReference>
<dbReference type="PROSITE" id="PS00198">
    <property type="entry name" value="4FE4S_FER_1"/>
    <property type="match status" value="2"/>
</dbReference>
<dbReference type="PROSITE" id="PS51379">
    <property type="entry name" value="4FE4S_FER_2"/>
    <property type="match status" value="2"/>
</dbReference>